<proteinExistence type="evidence at protein level"/>
<keyword id="KW-1003">Cell membrane</keyword>
<keyword id="KW-0165">Cleavage on pair of basic residues</keyword>
<keyword id="KW-0903">Direct protein sequencing</keyword>
<keyword id="KW-1015">Disulfide bond</keyword>
<keyword id="KW-0272">Extracellular matrix</keyword>
<keyword id="KW-0278">Fertilization</keyword>
<keyword id="KW-0325">Glycoprotein</keyword>
<keyword id="KW-0472">Membrane</keyword>
<keyword id="KW-0873">Pyrrolidone carboxylic acid</keyword>
<keyword id="KW-1185">Reference proteome</keyword>
<keyword id="KW-0964">Secreted</keyword>
<keyword id="KW-0732">Signal</keyword>
<keyword id="KW-0812">Transmembrane</keyword>
<keyword id="KW-1133">Transmembrane helix</keyword>
<protein>
    <recommendedName>
        <fullName>Zona pellucida sperm-binding protein 1</fullName>
    </recommendedName>
    <alternativeName>
        <fullName>Zona pellucida glycoprotein 1</fullName>
        <shortName>Zp-1</shortName>
    </alternativeName>
    <component>
        <recommendedName>
            <fullName>Processed zona pellucida sperm-binding protein 1</fullName>
        </recommendedName>
    </component>
</protein>
<name>ZP1_RAT</name>
<organism>
    <name type="scientific">Rattus norvegicus</name>
    <name type="common">Rat</name>
    <dbReference type="NCBI Taxonomy" id="10116"/>
    <lineage>
        <taxon>Eukaryota</taxon>
        <taxon>Metazoa</taxon>
        <taxon>Chordata</taxon>
        <taxon>Craniata</taxon>
        <taxon>Vertebrata</taxon>
        <taxon>Euteleostomi</taxon>
        <taxon>Mammalia</taxon>
        <taxon>Eutheria</taxon>
        <taxon>Euarchontoglires</taxon>
        <taxon>Glires</taxon>
        <taxon>Rodentia</taxon>
        <taxon>Myomorpha</taxon>
        <taxon>Muroidea</taxon>
        <taxon>Muridae</taxon>
        <taxon>Murinae</taxon>
        <taxon>Rattus</taxon>
    </lineage>
</organism>
<dbReference type="EMBL" id="AB000928">
    <property type="protein sequence ID" value="BAA24486.1"/>
    <property type="molecule type" value="mRNA"/>
</dbReference>
<dbReference type="RefSeq" id="NP_445961.1">
    <property type="nucleotide sequence ID" value="NM_053509.1"/>
</dbReference>
<dbReference type="SMR" id="O54766"/>
<dbReference type="FunCoup" id="O54766">
    <property type="interactions" value="9"/>
</dbReference>
<dbReference type="STRING" id="10116.ENSRNOP00000028396"/>
<dbReference type="GlyCosmos" id="O54766">
    <property type="glycosylation" value="3 sites, No reported glycans"/>
</dbReference>
<dbReference type="GlyGen" id="O54766">
    <property type="glycosylation" value="4 sites"/>
</dbReference>
<dbReference type="iPTMnet" id="O54766"/>
<dbReference type="PhosphoSitePlus" id="O54766"/>
<dbReference type="PaxDb" id="10116-ENSRNOP00000028396"/>
<dbReference type="GeneID" id="85271"/>
<dbReference type="KEGG" id="rno:85271"/>
<dbReference type="UCSC" id="RGD:620604">
    <property type="organism name" value="rat"/>
</dbReference>
<dbReference type="AGR" id="RGD:620604"/>
<dbReference type="CTD" id="22917"/>
<dbReference type="RGD" id="620604">
    <property type="gene designation" value="Zp1"/>
</dbReference>
<dbReference type="eggNOG" id="ENOG502RYNN">
    <property type="taxonomic scope" value="Eukaryota"/>
</dbReference>
<dbReference type="InParanoid" id="O54766"/>
<dbReference type="OrthoDB" id="51924at9989"/>
<dbReference type="PhylomeDB" id="O54766"/>
<dbReference type="PRO" id="PR:O54766"/>
<dbReference type="Proteomes" id="UP000002494">
    <property type="component" value="Unplaced"/>
</dbReference>
<dbReference type="GO" id="GO:0062023">
    <property type="term" value="C:collagen-containing extracellular matrix"/>
    <property type="evidence" value="ECO:0000318"/>
    <property type="project" value="GO_Central"/>
</dbReference>
<dbReference type="GO" id="GO:0035805">
    <property type="term" value="C:egg coat"/>
    <property type="evidence" value="ECO:0000250"/>
    <property type="project" value="UniProtKB"/>
</dbReference>
<dbReference type="GO" id="GO:0005576">
    <property type="term" value="C:extracellular region"/>
    <property type="evidence" value="ECO:0007669"/>
    <property type="project" value="UniProtKB-KW"/>
</dbReference>
<dbReference type="GO" id="GO:0005886">
    <property type="term" value="C:plasma membrane"/>
    <property type="evidence" value="ECO:0007669"/>
    <property type="project" value="UniProtKB-SubCell"/>
</dbReference>
<dbReference type="GO" id="GO:0032190">
    <property type="term" value="F:acrosin binding"/>
    <property type="evidence" value="ECO:0000318"/>
    <property type="project" value="GO_Central"/>
</dbReference>
<dbReference type="GO" id="GO:0035804">
    <property type="term" value="F:structural constituent of egg coat"/>
    <property type="evidence" value="ECO:0000250"/>
    <property type="project" value="UniProtKB"/>
</dbReference>
<dbReference type="GO" id="GO:0007339">
    <property type="term" value="P:binding of sperm to zona pellucida"/>
    <property type="evidence" value="ECO:0000318"/>
    <property type="project" value="GO_Central"/>
</dbReference>
<dbReference type="GO" id="GO:0060468">
    <property type="term" value="P:prevention of polyspermy"/>
    <property type="evidence" value="ECO:0000318"/>
    <property type="project" value="GO_Central"/>
</dbReference>
<dbReference type="CDD" id="cd00111">
    <property type="entry name" value="Trefoil"/>
    <property type="match status" value="1"/>
</dbReference>
<dbReference type="FunFam" id="2.60.40.3210:FF:000007">
    <property type="entry name" value="Zona pellucida glycoprotein 1"/>
    <property type="match status" value="1"/>
</dbReference>
<dbReference type="Gene3D" id="2.60.40.4100">
    <property type="entry name" value="Zona pellucida, ZP-C domain"/>
    <property type="match status" value="1"/>
</dbReference>
<dbReference type="Gene3D" id="2.60.40.3210">
    <property type="entry name" value="Zona pellucida, ZP-N domain"/>
    <property type="match status" value="1"/>
</dbReference>
<dbReference type="InterPro" id="IPR017957">
    <property type="entry name" value="P_trefoil_CS"/>
</dbReference>
<dbReference type="InterPro" id="IPR000519">
    <property type="entry name" value="P_trefoil_dom"/>
</dbReference>
<dbReference type="InterPro" id="IPR044913">
    <property type="entry name" value="P_trefoil_dom_sf"/>
</dbReference>
<dbReference type="InterPro" id="IPR051148">
    <property type="entry name" value="Zona_Pellucida_Domain_gp"/>
</dbReference>
<dbReference type="InterPro" id="IPR055355">
    <property type="entry name" value="ZP-C"/>
</dbReference>
<dbReference type="InterPro" id="IPR042235">
    <property type="entry name" value="ZP-C_dom"/>
</dbReference>
<dbReference type="InterPro" id="IPR055356">
    <property type="entry name" value="ZP-N"/>
</dbReference>
<dbReference type="InterPro" id="IPR054554">
    <property type="entry name" value="ZP1/4_Ig-like"/>
</dbReference>
<dbReference type="InterPro" id="IPR048290">
    <property type="entry name" value="ZP_chr"/>
</dbReference>
<dbReference type="InterPro" id="IPR001507">
    <property type="entry name" value="ZP_dom"/>
</dbReference>
<dbReference type="InterPro" id="IPR017977">
    <property type="entry name" value="ZP_dom_CS"/>
</dbReference>
<dbReference type="PANTHER" id="PTHR23343">
    <property type="entry name" value="ZONA PELLUCIDA SPERM-BINDING PROTEIN"/>
    <property type="match status" value="1"/>
</dbReference>
<dbReference type="PANTHER" id="PTHR23343:SF41">
    <property type="entry name" value="ZONA PELLUCIDA SPERM-BINDING PROTEIN 1"/>
    <property type="match status" value="1"/>
</dbReference>
<dbReference type="Pfam" id="PF00088">
    <property type="entry name" value="Trefoil"/>
    <property type="match status" value="1"/>
</dbReference>
<dbReference type="Pfam" id="PF00100">
    <property type="entry name" value="Zona_pellucida"/>
    <property type="match status" value="1"/>
</dbReference>
<dbReference type="Pfam" id="PF23344">
    <property type="entry name" value="ZP-N"/>
    <property type="match status" value="1"/>
</dbReference>
<dbReference type="Pfam" id="PF22821">
    <property type="entry name" value="ZP1_ZP4_Ig-like"/>
    <property type="match status" value="1"/>
</dbReference>
<dbReference type="PRINTS" id="PR00023">
    <property type="entry name" value="ZPELLUCIDA"/>
</dbReference>
<dbReference type="SMART" id="SM00018">
    <property type="entry name" value="PD"/>
    <property type="match status" value="1"/>
</dbReference>
<dbReference type="SMART" id="SM00241">
    <property type="entry name" value="ZP"/>
    <property type="match status" value="1"/>
</dbReference>
<dbReference type="SUPFAM" id="SSF57492">
    <property type="entry name" value="Trefoil"/>
    <property type="match status" value="1"/>
</dbReference>
<dbReference type="PROSITE" id="PS00025">
    <property type="entry name" value="P_TREFOIL_1"/>
    <property type="match status" value="1"/>
</dbReference>
<dbReference type="PROSITE" id="PS51448">
    <property type="entry name" value="P_TREFOIL_2"/>
    <property type="match status" value="1"/>
</dbReference>
<dbReference type="PROSITE" id="PS00682">
    <property type="entry name" value="ZP_1"/>
    <property type="match status" value="1"/>
</dbReference>
<dbReference type="PROSITE" id="PS51034">
    <property type="entry name" value="ZP_2"/>
    <property type="match status" value="1"/>
</dbReference>
<sequence length="617" mass="67853">MAWGCFVVLLLLVAAPLRLGQHLHLKPGFQYSYDCGVQGMQLLVFPRPNQTIQFKVLDEFGNRFEVNNCSICYHWVISEAQKPAVFSADYKGCHVLEKQDGRFHLRVFIQAVLPNGRVDTAQDVTLICPKPDHILTPESYLAPPTTPQPFIPHTFALHPISGHTLAGSGHTGLTTLYPETHPTPAPPSSEPGPVGPTVPQSQWGTLGSWELTELDSIGTHLLQERCQVASGHIPCMVKGSSEEACQQAGCCYDNTKEMPCYYGNTVTLQCFRSGYFTLVMSQETALTHGVMLDNVHLAYAPNGCPPTQKTSAFVVFHVPLTLCGTAIQVVGKQLVYENQLVSNIEVQTGPQGSITRDGVFRLHVRCIFNASDFLPIRASIFSPQPPAPVTRSGPLRLELRIATDKTFSSYYQGSDYPLVRLLQEPVYIEVRLLQRTDPGLALMLHQCWATPSASPFEQPQWPILSDGCPFKGDNYRTQMVAADRATLPFWSHYQRFTIATFTLLDSSSQNALRGQVYFFCSASACHPVGSETCSTTCDSEIARHRRSSGHHNSTIRALDIVSSPGAVGFEDAPKLEPSGSTRNSGSRPLLWVLQLLALTLVLGDGVLVGLSWAWAWA</sequence>
<accession>O54766</accession>
<feature type="signal peptide" evidence="9">
    <location>
        <begin position="1"/>
        <end position="20"/>
    </location>
</feature>
<feature type="chain" id="PRO_0000041681" description="Zona pellucida sperm-binding protein 1">
    <location>
        <begin position="21"/>
        <end position="544"/>
    </location>
</feature>
<feature type="chain" id="PRO_0000304555" description="Processed zona pellucida sperm-binding protein 1">
    <location>
        <begin position="21"/>
        <end status="unknown"/>
    </location>
</feature>
<feature type="propeptide" id="PRO_0000041682" description="Removed in mature form" evidence="9">
    <location>
        <begin position="545"/>
        <end position="617"/>
    </location>
</feature>
<feature type="topological domain" description="Extracellular" evidence="5">
    <location>
        <begin position="21"/>
        <end position="588"/>
    </location>
</feature>
<feature type="transmembrane region" description="Helical" evidence="5">
    <location>
        <begin position="589"/>
        <end position="609"/>
    </location>
</feature>
<feature type="topological domain" description="Cytoplasmic" evidence="5">
    <location>
        <begin position="610"/>
        <end position="617"/>
    </location>
</feature>
<feature type="domain" description="P-type" evidence="7">
    <location>
        <begin position="224"/>
        <end position="264"/>
    </location>
</feature>
<feature type="domain" description="ZP" evidence="6">
    <location>
        <begin position="269"/>
        <end position="540"/>
    </location>
</feature>
<feature type="region of interest" description="Disordered" evidence="8">
    <location>
        <begin position="179"/>
        <end position="198"/>
    </location>
</feature>
<feature type="compositionally biased region" description="Pro residues" evidence="8">
    <location>
        <begin position="181"/>
        <end position="196"/>
    </location>
</feature>
<feature type="modified residue" description="Pyrrolidone carboxylic acid" evidence="9">
    <location>
        <position position="21"/>
    </location>
</feature>
<feature type="glycosylation site" description="N-linked (GlcNAc...) asparagine" evidence="9">
    <location>
        <position position="49"/>
    </location>
</feature>
<feature type="glycosylation site" description="N-linked (GlcNAc...) asparagine" evidence="9">
    <location>
        <position position="68"/>
    </location>
</feature>
<feature type="glycosylation site" description="N-linked (GlcNAc...) asparagine" evidence="9">
    <location>
        <position position="369"/>
    </location>
</feature>
<feature type="disulfide bond" evidence="7">
    <location>
        <begin position="226"/>
        <end position="251"/>
    </location>
</feature>
<feature type="disulfide bond" evidence="7">
    <location>
        <begin position="235"/>
        <end position="250"/>
    </location>
</feature>
<feature type="disulfide bond" evidence="7">
    <location>
        <begin position="245"/>
        <end position="260"/>
    </location>
</feature>
<feature type="disulfide bond" evidence="7 9">
    <location>
        <begin position="447"/>
        <end position="468"/>
    </location>
</feature>
<evidence type="ECO:0000250" key="1"/>
<evidence type="ECO:0000250" key="2">
    <source>
        <dbReference type="UniProtKB" id="P20239"/>
    </source>
</evidence>
<evidence type="ECO:0000250" key="3">
    <source>
        <dbReference type="UniProtKB" id="P48829"/>
    </source>
</evidence>
<evidence type="ECO:0000250" key="4">
    <source>
        <dbReference type="UniProtKB" id="P60852"/>
    </source>
</evidence>
<evidence type="ECO:0000255" key="5"/>
<evidence type="ECO:0000255" key="6">
    <source>
        <dbReference type="PROSITE-ProRule" id="PRU00375"/>
    </source>
</evidence>
<evidence type="ECO:0000255" key="7">
    <source>
        <dbReference type="PROSITE-ProRule" id="PRU00779"/>
    </source>
</evidence>
<evidence type="ECO:0000256" key="8">
    <source>
        <dbReference type="SAM" id="MobiDB-lite"/>
    </source>
</evidence>
<evidence type="ECO:0000269" key="9">
    <source>
    </source>
</evidence>
<evidence type="ECO:0000305" key="10"/>
<comment type="function">
    <text>Component of the zona pellucida, an extracellular matrix surrounding oocytes which mediates sperm binding, induction of the acrosome reaction and prevents post-fertilization polyspermy. The zona pellucida is composed of 3 to 4 glycoproteins, ZP1, ZP2, ZP3, and ZP4. ZP1 ensures the structural integrity of the zona pellucida.</text>
</comment>
<comment type="subunit">
    <text evidence="2 4">Polymers of ZP2 and ZP3 organized into long filaments cross-linked by ZP1 homodimers. Interacts with ZP3.</text>
</comment>
<comment type="subcellular location">
    <molecule>Processed zona pellucida sperm-binding protein 1</molecule>
    <subcellularLocation>
        <location evidence="4">Zona pellucida</location>
    </subcellularLocation>
</comment>
<comment type="subcellular location">
    <subcellularLocation>
        <location evidence="3">Cell membrane</location>
        <topology evidence="5">Single-pass type I membrane protein</topology>
    </subcellularLocation>
</comment>
<comment type="tissue specificity">
    <text>Expressed in oocytes.</text>
</comment>
<comment type="domain">
    <text>The ZP domain is involved in the polymerization of the ZP proteins to form the zona pellucida.</text>
</comment>
<comment type="PTM">
    <text>Proteolytically cleaved before the transmembrane segment to yield the secreted ectodomain incorporated in the zona pellucida.</text>
</comment>
<comment type="PTM">
    <text evidence="1">O-glycosylated.</text>
</comment>
<comment type="similarity">
    <text evidence="10">Belongs to the ZP domain family. ZPB subfamily.</text>
</comment>
<gene>
    <name type="primary">Zp1</name>
</gene>
<reference key="1">
    <citation type="journal article" date="1998" name="Mol. Reprod. Dev.">
        <title>Rat zona pellucida glycoproteins: molecular cloning and characterization of the three major components.</title>
        <authorList>
            <person name="Akatsuka K."/>
            <person name="Yoshida-Komiya H."/>
            <person name="Tulsiani D.R.P."/>
            <person name="Orgebin-Crist M.-C."/>
            <person name="Hiroi M."/>
            <person name="Araki Y."/>
        </authorList>
    </citation>
    <scope>NUCLEOTIDE SEQUENCE [MRNA]</scope>
    <source>
        <strain>Sprague-Dawley</strain>
        <tissue>Ovary</tissue>
    </source>
</reference>
<reference key="2">
    <citation type="journal article" date="2005" name="Biochemistry">
        <title>Structural conservation of mouse and rat zona pellucida glycoproteins. Probing the native rat zona pellucida proteome by mass spectrometry.</title>
        <authorList>
            <person name="Boja E.S."/>
            <person name="Hoodbhoy T."/>
            <person name="Garfield M."/>
            <person name="Fales H.M."/>
        </authorList>
    </citation>
    <scope>PROTEIN SEQUENCE OF C-TERMINUS</scope>
    <scope>PYROGLUTAMATE FORMATION AT GLN-21</scope>
    <scope>DISULFIDE BOND FORMATION AT 447-CYS--CYS-468</scope>
    <scope>GLYCOSYLATION AT ASN-49; ASN-68 AND ASN-369</scope>
    <scope>IDENTIFICATION BY MASS SPECTROMETRY</scope>
</reference>